<proteinExistence type="inferred from homology"/>
<organism>
    <name type="scientific">Clostridium acetobutylicum (strain ATCC 824 / DSM 792 / JCM 1419 / IAM 19013 / LMG 5710 / NBRC 13948 / NRRL B-527 / VKM B-1787 / 2291 / W)</name>
    <dbReference type="NCBI Taxonomy" id="272562"/>
    <lineage>
        <taxon>Bacteria</taxon>
        <taxon>Bacillati</taxon>
        <taxon>Bacillota</taxon>
        <taxon>Clostridia</taxon>
        <taxon>Eubacteriales</taxon>
        <taxon>Clostridiaceae</taxon>
        <taxon>Clostridium</taxon>
    </lineage>
</organism>
<comment type="function">
    <text evidence="1">Essential cell division protein that coordinates cell division and chromosome segregation. The N-terminus is involved in assembly of the cell-division machinery. The C-terminus functions as a DNA motor that moves dsDNA in an ATP-dependent manner towards the dif recombination site, which is located within the replication terminus region. Required for activation of the Xer recombinase, allowing activation of chromosome unlinking by recombination (By similarity).</text>
</comment>
<comment type="subunit">
    <text evidence="1">Homohexamer. Forms a ring that surrounds DNA (By similarity).</text>
</comment>
<comment type="subcellular location">
    <subcellularLocation>
        <location evidence="1">Cell membrane</location>
        <topology evidence="1">Multi-pass membrane protein</topology>
    </subcellularLocation>
    <text evidence="1">Located at the septum.</text>
</comment>
<comment type="domain">
    <text evidence="1">Consists of an N-terminal domain, which is sufficient for the localization to the septal ring and is required for cell division, followed by a linker domain, and a C-terminal domain, which forms the translocation motor involved in chromosome segregation. The C-terminal domain can be further subdivided into alpha, beta and gamma subdomains. The alpha and beta subdomains form the DNA pump, and the gamma subdomain is a regulatory subdomain (By similarity).</text>
</comment>
<comment type="similarity">
    <text evidence="4">Belongs to the FtsK/SpoIIIE/SftA family.</text>
</comment>
<reference key="1">
    <citation type="journal article" date="2001" name="J. Bacteriol.">
        <title>Genome sequence and comparative analysis of the solvent-producing bacterium Clostridium acetobutylicum.</title>
        <authorList>
            <person name="Noelling J."/>
            <person name="Breton G."/>
            <person name="Omelchenko M.V."/>
            <person name="Makarova K.S."/>
            <person name="Zeng Q."/>
            <person name="Gibson R."/>
            <person name="Lee H.M."/>
            <person name="Dubois J."/>
            <person name="Qiu D."/>
            <person name="Hitti J."/>
            <person name="Wolf Y.I."/>
            <person name="Tatusov R.L."/>
            <person name="Sabathe F."/>
            <person name="Doucette-Stamm L.A."/>
            <person name="Soucaille P."/>
            <person name="Daly M.J."/>
            <person name="Bennett G.N."/>
            <person name="Koonin E.V."/>
            <person name="Smith D.R."/>
        </authorList>
    </citation>
    <scope>NUCLEOTIDE SEQUENCE [LARGE SCALE GENOMIC DNA]</scope>
    <source>
        <strain>ATCC 824 / DSM 792 / JCM 1419 / IAM 19013 / LMG 5710 / NBRC 13948 / NRRL B-527 / VKM B-1787 / 2291 / W</strain>
    </source>
</reference>
<feature type="chain" id="PRO_0000098251" description="DNA translocase FtsK">
    <location>
        <begin position="1"/>
        <end position="765"/>
    </location>
</feature>
<feature type="transmembrane region" description="Helical" evidence="2">
    <location>
        <begin position="47"/>
        <end position="67"/>
    </location>
</feature>
<feature type="transmembrane region" description="Helical" evidence="2">
    <location>
        <begin position="75"/>
        <end position="95"/>
    </location>
</feature>
<feature type="transmembrane region" description="Helical" evidence="2">
    <location>
        <begin position="110"/>
        <end position="130"/>
    </location>
</feature>
<feature type="transmembrane region" description="Helical" evidence="2">
    <location>
        <begin position="167"/>
        <end position="187"/>
    </location>
</feature>
<feature type="topological domain" description="Cytoplasmic" evidence="2">
    <location>
        <begin position="188"/>
        <end position="765"/>
    </location>
</feature>
<feature type="domain" description="FtsK" evidence="3">
    <location>
        <begin position="435"/>
        <end position="626"/>
    </location>
</feature>
<feature type="binding site" evidence="3">
    <location>
        <begin position="455"/>
        <end position="460"/>
    </location>
    <ligand>
        <name>ATP</name>
        <dbReference type="ChEBI" id="CHEBI:30616"/>
    </ligand>
</feature>
<evidence type="ECO:0000250" key="1"/>
<evidence type="ECO:0000255" key="2"/>
<evidence type="ECO:0000255" key="3">
    <source>
        <dbReference type="PROSITE-ProRule" id="PRU00289"/>
    </source>
</evidence>
<evidence type="ECO:0000305" key="4"/>
<protein>
    <recommendedName>
        <fullName>DNA translocase FtsK</fullName>
    </recommendedName>
</protein>
<gene>
    <name type="primary">ftsK</name>
    <name type="ordered locus">CA_C1812</name>
</gene>
<name>FTSK_CLOAB</name>
<dbReference type="EMBL" id="AE001437">
    <property type="protein sequence ID" value="AAK79777.1"/>
    <property type="molecule type" value="Genomic_DNA"/>
</dbReference>
<dbReference type="PIR" id="F97123">
    <property type="entry name" value="F97123"/>
</dbReference>
<dbReference type="RefSeq" id="NP_348437.1">
    <property type="nucleotide sequence ID" value="NC_003030.1"/>
</dbReference>
<dbReference type="RefSeq" id="WP_010965118.1">
    <property type="nucleotide sequence ID" value="NC_003030.1"/>
</dbReference>
<dbReference type="SMR" id="Q97I41"/>
<dbReference type="STRING" id="272562.CA_C1812"/>
<dbReference type="KEGG" id="cac:CA_C1812"/>
<dbReference type="PATRIC" id="fig|272562.8.peg.2018"/>
<dbReference type="eggNOG" id="COG1674">
    <property type="taxonomic scope" value="Bacteria"/>
</dbReference>
<dbReference type="HOGENOM" id="CLU_001981_9_6_9"/>
<dbReference type="OrthoDB" id="9807790at2"/>
<dbReference type="Proteomes" id="UP000000814">
    <property type="component" value="Chromosome"/>
</dbReference>
<dbReference type="GO" id="GO:0005886">
    <property type="term" value="C:plasma membrane"/>
    <property type="evidence" value="ECO:0007669"/>
    <property type="project" value="UniProtKB-SubCell"/>
</dbReference>
<dbReference type="GO" id="GO:0005524">
    <property type="term" value="F:ATP binding"/>
    <property type="evidence" value="ECO:0007669"/>
    <property type="project" value="UniProtKB-KW"/>
</dbReference>
<dbReference type="GO" id="GO:0003677">
    <property type="term" value="F:DNA binding"/>
    <property type="evidence" value="ECO:0007669"/>
    <property type="project" value="UniProtKB-KW"/>
</dbReference>
<dbReference type="GO" id="GO:0051301">
    <property type="term" value="P:cell division"/>
    <property type="evidence" value="ECO:0007669"/>
    <property type="project" value="UniProtKB-KW"/>
</dbReference>
<dbReference type="GO" id="GO:0007059">
    <property type="term" value="P:chromosome segregation"/>
    <property type="evidence" value="ECO:0007669"/>
    <property type="project" value="UniProtKB-KW"/>
</dbReference>
<dbReference type="CDD" id="cd01127">
    <property type="entry name" value="TrwB_TraG_TraD_VirD4"/>
    <property type="match status" value="1"/>
</dbReference>
<dbReference type="Gene3D" id="3.30.980.40">
    <property type="match status" value="1"/>
</dbReference>
<dbReference type="Gene3D" id="3.40.50.300">
    <property type="entry name" value="P-loop containing nucleotide triphosphate hydrolases"/>
    <property type="match status" value="1"/>
</dbReference>
<dbReference type="Gene3D" id="1.10.10.10">
    <property type="entry name" value="Winged helix-like DNA-binding domain superfamily/Winged helix DNA-binding domain"/>
    <property type="match status" value="1"/>
</dbReference>
<dbReference type="InterPro" id="IPR050206">
    <property type="entry name" value="FtsK/SpoIIIE/SftA"/>
</dbReference>
<dbReference type="InterPro" id="IPR041027">
    <property type="entry name" value="FtsK_alpha"/>
</dbReference>
<dbReference type="InterPro" id="IPR002543">
    <property type="entry name" value="FtsK_dom"/>
</dbReference>
<dbReference type="InterPro" id="IPR018541">
    <property type="entry name" value="Ftsk_gamma"/>
</dbReference>
<dbReference type="InterPro" id="IPR027417">
    <property type="entry name" value="P-loop_NTPase"/>
</dbReference>
<dbReference type="InterPro" id="IPR036388">
    <property type="entry name" value="WH-like_DNA-bd_sf"/>
</dbReference>
<dbReference type="InterPro" id="IPR036390">
    <property type="entry name" value="WH_DNA-bd_sf"/>
</dbReference>
<dbReference type="PANTHER" id="PTHR22683:SF41">
    <property type="entry name" value="DNA TRANSLOCASE FTSK"/>
    <property type="match status" value="1"/>
</dbReference>
<dbReference type="PANTHER" id="PTHR22683">
    <property type="entry name" value="SPORULATION PROTEIN RELATED"/>
    <property type="match status" value="1"/>
</dbReference>
<dbReference type="Pfam" id="PF17854">
    <property type="entry name" value="FtsK_alpha"/>
    <property type="match status" value="1"/>
</dbReference>
<dbReference type="Pfam" id="PF09397">
    <property type="entry name" value="FtsK_gamma"/>
    <property type="match status" value="1"/>
</dbReference>
<dbReference type="Pfam" id="PF01580">
    <property type="entry name" value="FtsK_SpoIIIE"/>
    <property type="match status" value="1"/>
</dbReference>
<dbReference type="SMART" id="SM00843">
    <property type="entry name" value="Ftsk_gamma"/>
    <property type="match status" value="1"/>
</dbReference>
<dbReference type="SUPFAM" id="SSF52540">
    <property type="entry name" value="P-loop containing nucleoside triphosphate hydrolases"/>
    <property type="match status" value="1"/>
</dbReference>
<dbReference type="SUPFAM" id="SSF46785">
    <property type="entry name" value="Winged helix' DNA-binding domain"/>
    <property type="match status" value="1"/>
</dbReference>
<dbReference type="PROSITE" id="PS50901">
    <property type="entry name" value="FTSK"/>
    <property type="match status" value="1"/>
</dbReference>
<accession>Q97I41</accession>
<sequence>MVTIKINNNVHIILEVIYLPRNKQYKKNKQDKISETTLNSDIAGISIFAFGAFAAVSMFFTSFTGIIGNGMKKLLFTLVGIGAYIFPILLMFIGVCYLIKKGKITFSKRFYGVNIIIINTLMLIQMQKLSLYYNGNILDGIKKIYESSDTFHGGVISYILDVPIYKLFGKGYFVLFITLYIISFLLVSEKSAGEIIRENLKKKPLKKTKPSVDETKTMDYENDNKDKDETLAKKISSKIKIVDFMKNEGNVDSNKGQALEEIAVYDSAEKNENESKVIGAELEDAIGQTSSNNSDITYEFPPISLLNVNETSKLKKSDKKELLSSAEKLTETLNSFGVDAKVIQVSKGPSVTRYELQPSAGVKVSKIINLSDDIALNLAASGVRIEAPIPGKSAIGIEVPNKDLTAVFLSEVIQSETFSNSKSNLAFALGKDIGGNCVVTDLTKMPHLLIAGATGSGKSVCINTLIISLLYKCAPTDVKLLMIDPKVVELSVYNGIPHLLIPVVTNPKKAAGALNWAVNEMTKRYKLFAENNVRNIEGYNDLYTKNKVESKLPWIVIIIDELADLMMVCPNDVEDYIGRLAQMARAAGMHLVIATQRPSVDVITGVIKANIPSRISFAVSSQIDSRTILDTSGAEKLLGKGDMLFNPVGESKPIRIQGAFINEEEVERVVGFIRNESTETQYKEEIIEQINSNVSKSEGDEDELLEEALKIIIETKQASTSLIQRKLRIGYNRAARIMDQLEEKGYISAKDGTKPRNILVDKDDL</sequence>
<keyword id="KW-0067">ATP-binding</keyword>
<keyword id="KW-0131">Cell cycle</keyword>
<keyword id="KW-0132">Cell division</keyword>
<keyword id="KW-1003">Cell membrane</keyword>
<keyword id="KW-0159">Chromosome partition</keyword>
<keyword id="KW-0238">DNA-binding</keyword>
<keyword id="KW-0472">Membrane</keyword>
<keyword id="KW-0547">Nucleotide-binding</keyword>
<keyword id="KW-1185">Reference proteome</keyword>
<keyword id="KW-0812">Transmembrane</keyword>
<keyword id="KW-1133">Transmembrane helix</keyword>